<accession>Q2RG43</accession>
<organism>
    <name type="scientific">Moorella thermoacetica (strain ATCC 39073 / JCM 9320)</name>
    <dbReference type="NCBI Taxonomy" id="264732"/>
    <lineage>
        <taxon>Bacteria</taxon>
        <taxon>Bacillati</taxon>
        <taxon>Bacillota</taxon>
        <taxon>Clostridia</taxon>
        <taxon>Moorellales</taxon>
        <taxon>Moorellaceae</taxon>
        <taxon>Moorella</taxon>
    </lineage>
</organism>
<reference key="1">
    <citation type="journal article" date="2008" name="Environ. Microbiol.">
        <title>The complete genome sequence of Moorella thermoacetica (f. Clostridium thermoaceticum).</title>
        <authorList>
            <person name="Pierce E."/>
            <person name="Xie G."/>
            <person name="Barabote R.D."/>
            <person name="Saunders E."/>
            <person name="Han C.S."/>
            <person name="Detter J.C."/>
            <person name="Richardson P."/>
            <person name="Brettin T.S."/>
            <person name="Das A."/>
            <person name="Ljungdahl L.G."/>
            <person name="Ragsdale S.W."/>
        </authorList>
    </citation>
    <scope>NUCLEOTIDE SEQUENCE [LARGE SCALE GENOMIC DNA]</scope>
    <source>
        <strain>ATCC 39073 / JCM 9320</strain>
    </source>
</reference>
<comment type="function">
    <text evidence="1">Plays an important role in the de novo pathway of purine nucleotide biosynthesis. Catalyzes the first committed step in the biosynthesis of AMP from IMP.</text>
</comment>
<comment type="catalytic activity">
    <reaction evidence="1">
        <text>IMP + L-aspartate + GTP = N(6)-(1,2-dicarboxyethyl)-AMP + GDP + phosphate + 2 H(+)</text>
        <dbReference type="Rhea" id="RHEA:15753"/>
        <dbReference type="ChEBI" id="CHEBI:15378"/>
        <dbReference type="ChEBI" id="CHEBI:29991"/>
        <dbReference type="ChEBI" id="CHEBI:37565"/>
        <dbReference type="ChEBI" id="CHEBI:43474"/>
        <dbReference type="ChEBI" id="CHEBI:57567"/>
        <dbReference type="ChEBI" id="CHEBI:58053"/>
        <dbReference type="ChEBI" id="CHEBI:58189"/>
        <dbReference type="EC" id="6.3.4.4"/>
    </reaction>
</comment>
<comment type="cofactor">
    <cofactor evidence="1">
        <name>Mg(2+)</name>
        <dbReference type="ChEBI" id="CHEBI:18420"/>
    </cofactor>
    <text evidence="1">Binds 1 Mg(2+) ion per subunit.</text>
</comment>
<comment type="pathway">
    <text evidence="1">Purine metabolism; AMP biosynthesis via de novo pathway; AMP from IMP: step 1/2.</text>
</comment>
<comment type="subunit">
    <text evidence="1">Homodimer.</text>
</comment>
<comment type="subcellular location">
    <subcellularLocation>
        <location evidence="1">Cytoplasm</location>
    </subcellularLocation>
</comment>
<comment type="similarity">
    <text evidence="1">Belongs to the adenylosuccinate synthetase family.</text>
</comment>
<evidence type="ECO:0000255" key="1">
    <source>
        <dbReference type="HAMAP-Rule" id="MF_00011"/>
    </source>
</evidence>
<proteinExistence type="inferred from homology"/>
<keyword id="KW-0963">Cytoplasm</keyword>
<keyword id="KW-0342">GTP-binding</keyword>
<keyword id="KW-0436">Ligase</keyword>
<keyword id="KW-0460">Magnesium</keyword>
<keyword id="KW-0479">Metal-binding</keyword>
<keyword id="KW-0547">Nucleotide-binding</keyword>
<keyword id="KW-0658">Purine biosynthesis</keyword>
<dbReference type="EC" id="6.3.4.4" evidence="1"/>
<dbReference type="EMBL" id="CP000232">
    <property type="protein sequence ID" value="ABC20596.1"/>
    <property type="molecule type" value="Genomic_DNA"/>
</dbReference>
<dbReference type="RefSeq" id="YP_431139.1">
    <property type="nucleotide sequence ID" value="NC_007644.1"/>
</dbReference>
<dbReference type="SMR" id="Q2RG43"/>
<dbReference type="STRING" id="264732.Moth_2309"/>
<dbReference type="EnsemblBacteria" id="ABC20596">
    <property type="protein sequence ID" value="ABC20596"/>
    <property type="gene ID" value="Moth_2309"/>
</dbReference>
<dbReference type="KEGG" id="mta:Moth_2309"/>
<dbReference type="PATRIC" id="fig|264732.11.peg.2515"/>
<dbReference type="eggNOG" id="COG0104">
    <property type="taxonomic scope" value="Bacteria"/>
</dbReference>
<dbReference type="HOGENOM" id="CLU_029848_0_0_9"/>
<dbReference type="OrthoDB" id="9807553at2"/>
<dbReference type="UniPathway" id="UPA00075">
    <property type="reaction ID" value="UER00335"/>
</dbReference>
<dbReference type="GO" id="GO:0005737">
    <property type="term" value="C:cytoplasm"/>
    <property type="evidence" value="ECO:0007669"/>
    <property type="project" value="UniProtKB-SubCell"/>
</dbReference>
<dbReference type="GO" id="GO:0004019">
    <property type="term" value="F:adenylosuccinate synthase activity"/>
    <property type="evidence" value="ECO:0007669"/>
    <property type="project" value="UniProtKB-UniRule"/>
</dbReference>
<dbReference type="GO" id="GO:0005525">
    <property type="term" value="F:GTP binding"/>
    <property type="evidence" value="ECO:0007669"/>
    <property type="project" value="UniProtKB-UniRule"/>
</dbReference>
<dbReference type="GO" id="GO:0000287">
    <property type="term" value="F:magnesium ion binding"/>
    <property type="evidence" value="ECO:0007669"/>
    <property type="project" value="UniProtKB-UniRule"/>
</dbReference>
<dbReference type="GO" id="GO:0044208">
    <property type="term" value="P:'de novo' AMP biosynthetic process"/>
    <property type="evidence" value="ECO:0007669"/>
    <property type="project" value="UniProtKB-UniRule"/>
</dbReference>
<dbReference type="GO" id="GO:0046040">
    <property type="term" value="P:IMP metabolic process"/>
    <property type="evidence" value="ECO:0007669"/>
    <property type="project" value="TreeGrafter"/>
</dbReference>
<dbReference type="CDD" id="cd03108">
    <property type="entry name" value="AdSS"/>
    <property type="match status" value="1"/>
</dbReference>
<dbReference type="FunFam" id="1.10.300.10:FF:000001">
    <property type="entry name" value="Adenylosuccinate synthetase"/>
    <property type="match status" value="1"/>
</dbReference>
<dbReference type="FunFam" id="3.90.170.10:FF:000001">
    <property type="entry name" value="Adenylosuccinate synthetase"/>
    <property type="match status" value="1"/>
</dbReference>
<dbReference type="Gene3D" id="3.40.440.10">
    <property type="entry name" value="Adenylosuccinate Synthetase, subunit A, domain 1"/>
    <property type="match status" value="1"/>
</dbReference>
<dbReference type="Gene3D" id="1.10.300.10">
    <property type="entry name" value="Adenylosuccinate Synthetase, subunit A, domain 2"/>
    <property type="match status" value="1"/>
</dbReference>
<dbReference type="Gene3D" id="3.90.170.10">
    <property type="entry name" value="Adenylosuccinate Synthetase, subunit A, domain 3"/>
    <property type="match status" value="1"/>
</dbReference>
<dbReference type="HAMAP" id="MF_00011">
    <property type="entry name" value="Adenylosucc_synth"/>
    <property type="match status" value="1"/>
</dbReference>
<dbReference type="InterPro" id="IPR018220">
    <property type="entry name" value="Adenylosuccin_syn_GTP-bd"/>
</dbReference>
<dbReference type="InterPro" id="IPR033128">
    <property type="entry name" value="Adenylosuccin_syn_Lys_AS"/>
</dbReference>
<dbReference type="InterPro" id="IPR042109">
    <property type="entry name" value="Adenylosuccinate_synth_dom1"/>
</dbReference>
<dbReference type="InterPro" id="IPR042110">
    <property type="entry name" value="Adenylosuccinate_synth_dom2"/>
</dbReference>
<dbReference type="InterPro" id="IPR042111">
    <property type="entry name" value="Adenylosuccinate_synth_dom3"/>
</dbReference>
<dbReference type="InterPro" id="IPR001114">
    <property type="entry name" value="Adenylosuccinate_synthetase"/>
</dbReference>
<dbReference type="InterPro" id="IPR027417">
    <property type="entry name" value="P-loop_NTPase"/>
</dbReference>
<dbReference type="NCBIfam" id="NF002223">
    <property type="entry name" value="PRK01117.1"/>
    <property type="match status" value="1"/>
</dbReference>
<dbReference type="NCBIfam" id="TIGR00184">
    <property type="entry name" value="purA"/>
    <property type="match status" value="1"/>
</dbReference>
<dbReference type="PANTHER" id="PTHR11846">
    <property type="entry name" value="ADENYLOSUCCINATE SYNTHETASE"/>
    <property type="match status" value="1"/>
</dbReference>
<dbReference type="PANTHER" id="PTHR11846:SF0">
    <property type="entry name" value="ADENYLOSUCCINATE SYNTHETASE"/>
    <property type="match status" value="1"/>
</dbReference>
<dbReference type="Pfam" id="PF00709">
    <property type="entry name" value="Adenylsucc_synt"/>
    <property type="match status" value="1"/>
</dbReference>
<dbReference type="SMART" id="SM00788">
    <property type="entry name" value="Adenylsucc_synt"/>
    <property type="match status" value="1"/>
</dbReference>
<dbReference type="SUPFAM" id="SSF52540">
    <property type="entry name" value="P-loop containing nucleoside triphosphate hydrolases"/>
    <property type="match status" value="1"/>
</dbReference>
<dbReference type="PROSITE" id="PS01266">
    <property type="entry name" value="ADENYLOSUCCIN_SYN_1"/>
    <property type="match status" value="1"/>
</dbReference>
<dbReference type="PROSITE" id="PS00513">
    <property type="entry name" value="ADENYLOSUCCIN_SYN_2"/>
    <property type="match status" value="1"/>
</dbReference>
<feature type="chain" id="PRO_1000000864" description="Adenylosuccinate synthetase">
    <location>
        <begin position="1"/>
        <end position="427"/>
    </location>
</feature>
<feature type="active site" description="Proton acceptor" evidence="1">
    <location>
        <position position="13"/>
    </location>
</feature>
<feature type="active site" description="Proton donor" evidence="1">
    <location>
        <position position="41"/>
    </location>
</feature>
<feature type="binding site" evidence="1">
    <location>
        <begin position="12"/>
        <end position="18"/>
    </location>
    <ligand>
        <name>GTP</name>
        <dbReference type="ChEBI" id="CHEBI:37565"/>
    </ligand>
</feature>
<feature type="binding site" description="in other chain" evidence="1">
    <location>
        <begin position="13"/>
        <end position="16"/>
    </location>
    <ligand>
        <name>IMP</name>
        <dbReference type="ChEBI" id="CHEBI:58053"/>
        <note>ligand shared between dimeric partners</note>
    </ligand>
</feature>
<feature type="binding site" evidence="1">
    <location>
        <position position="13"/>
    </location>
    <ligand>
        <name>Mg(2+)</name>
        <dbReference type="ChEBI" id="CHEBI:18420"/>
    </ligand>
</feature>
<feature type="binding site" description="in other chain" evidence="1">
    <location>
        <begin position="38"/>
        <end position="41"/>
    </location>
    <ligand>
        <name>IMP</name>
        <dbReference type="ChEBI" id="CHEBI:58053"/>
        <note>ligand shared between dimeric partners</note>
    </ligand>
</feature>
<feature type="binding site" evidence="1">
    <location>
        <begin position="40"/>
        <end position="42"/>
    </location>
    <ligand>
        <name>GTP</name>
        <dbReference type="ChEBI" id="CHEBI:37565"/>
    </ligand>
</feature>
<feature type="binding site" evidence="1">
    <location>
        <position position="40"/>
    </location>
    <ligand>
        <name>Mg(2+)</name>
        <dbReference type="ChEBI" id="CHEBI:18420"/>
    </ligand>
</feature>
<feature type="binding site" description="in other chain" evidence="1">
    <location>
        <position position="128"/>
    </location>
    <ligand>
        <name>IMP</name>
        <dbReference type="ChEBI" id="CHEBI:58053"/>
        <note>ligand shared between dimeric partners</note>
    </ligand>
</feature>
<feature type="binding site" evidence="1">
    <location>
        <position position="142"/>
    </location>
    <ligand>
        <name>IMP</name>
        <dbReference type="ChEBI" id="CHEBI:58053"/>
        <note>ligand shared between dimeric partners</note>
    </ligand>
</feature>
<feature type="binding site" description="in other chain" evidence="1">
    <location>
        <position position="223"/>
    </location>
    <ligand>
        <name>IMP</name>
        <dbReference type="ChEBI" id="CHEBI:58053"/>
        <note>ligand shared between dimeric partners</note>
    </ligand>
</feature>
<feature type="binding site" description="in other chain" evidence="1">
    <location>
        <position position="238"/>
    </location>
    <ligand>
        <name>IMP</name>
        <dbReference type="ChEBI" id="CHEBI:58053"/>
        <note>ligand shared between dimeric partners</note>
    </ligand>
</feature>
<feature type="binding site" evidence="1">
    <location>
        <begin position="298"/>
        <end position="304"/>
    </location>
    <ligand>
        <name>substrate</name>
    </ligand>
</feature>
<feature type="binding site" description="in other chain" evidence="1">
    <location>
        <position position="302"/>
    </location>
    <ligand>
        <name>IMP</name>
        <dbReference type="ChEBI" id="CHEBI:58053"/>
        <note>ligand shared between dimeric partners</note>
    </ligand>
</feature>
<feature type="binding site" evidence="1">
    <location>
        <position position="304"/>
    </location>
    <ligand>
        <name>GTP</name>
        <dbReference type="ChEBI" id="CHEBI:37565"/>
    </ligand>
</feature>
<feature type="binding site" evidence="1">
    <location>
        <begin position="330"/>
        <end position="332"/>
    </location>
    <ligand>
        <name>GTP</name>
        <dbReference type="ChEBI" id="CHEBI:37565"/>
    </ligand>
</feature>
<feature type="binding site" evidence="1">
    <location>
        <begin position="412"/>
        <end position="414"/>
    </location>
    <ligand>
        <name>GTP</name>
        <dbReference type="ChEBI" id="CHEBI:37565"/>
    </ligand>
</feature>
<sequence>MAAVVLVGAQWGDEGKGKITDYLAERADVVIRYQGGSNAGHTVMVGHEEFKLHLVPSGILYPGKLCIIGNGVVLDPAVLVEELDGLAARGVDTSGLKISNRAHLILPYHKGLDAAEEEHRGAAMIGTTKRGIGPAYVDKAARTGIRVGDLLDWEEFSAKVAHNLAATNELLAKIYDRPGYDLQAILEEYAGYARRLRPLIADSVRLVNRALQEGRKVLFEGAQGTLLDLDQGTYPFVTSSYPVAGGACIGAGVGPTRIDKVIGVVKAYTTRVGSGPFPTEITGPAGDALRQQGMEFGTTTGRPRRCGWLDTVILRHAAEVNGLTGIALTKLDVLTGLDPLRICTSYRYRGTVGEDFPASLKALEECEPVYEELPGWHEDITGARSLDDLPANCRRYIRRLEELTGVPVHLIAVGPRRDQTIVLESPF</sequence>
<name>PURA_MOOTA</name>
<protein>
    <recommendedName>
        <fullName evidence="1">Adenylosuccinate synthetase</fullName>
        <shortName evidence="1">AMPSase</shortName>
        <shortName evidence="1">AdSS</shortName>
        <ecNumber evidence="1">6.3.4.4</ecNumber>
    </recommendedName>
    <alternativeName>
        <fullName evidence="1">IMP--aspartate ligase</fullName>
    </alternativeName>
</protein>
<gene>
    <name evidence="1" type="primary">purA</name>
    <name type="ordered locus">Moth_2309</name>
</gene>